<gene>
    <name evidence="1" type="primary">ybeY</name>
    <name type="ordered locus">TW489</name>
</gene>
<organism>
    <name type="scientific">Tropheryma whipplei (strain TW08/27)</name>
    <name type="common">Whipple's bacillus</name>
    <dbReference type="NCBI Taxonomy" id="218496"/>
    <lineage>
        <taxon>Bacteria</taxon>
        <taxon>Bacillati</taxon>
        <taxon>Actinomycetota</taxon>
        <taxon>Actinomycetes</taxon>
        <taxon>Micrococcales</taxon>
        <taxon>Tropherymataceae</taxon>
        <taxon>Tropheryma</taxon>
    </lineage>
</organism>
<comment type="function">
    <text evidence="1">Single strand-specific metallo-endoribonuclease involved in late-stage 70S ribosome quality control and in maturation of the 3' terminus of the 16S rRNA.</text>
</comment>
<comment type="cofactor">
    <cofactor evidence="1">
        <name>Zn(2+)</name>
        <dbReference type="ChEBI" id="CHEBI:29105"/>
    </cofactor>
    <text evidence="1">Binds 1 zinc ion.</text>
</comment>
<comment type="subcellular location">
    <subcellularLocation>
        <location evidence="1">Cytoplasm</location>
    </subcellularLocation>
</comment>
<comment type="similarity">
    <text evidence="1">Belongs to the endoribonuclease YbeY family.</text>
</comment>
<evidence type="ECO:0000255" key="1">
    <source>
        <dbReference type="HAMAP-Rule" id="MF_00009"/>
    </source>
</evidence>
<proteinExistence type="inferred from homology"/>
<dbReference type="EC" id="3.1.-.-" evidence="1"/>
<dbReference type="EMBL" id="BX251411">
    <property type="protein sequence ID" value="CAD67156.1"/>
    <property type="molecule type" value="Genomic_DNA"/>
</dbReference>
<dbReference type="RefSeq" id="WP_011096436.1">
    <property type="nucleotide sequence ID" value="NC_004551.1"/>
</dbReference>
<dbReference type="SMR" id="Q83HN7"/>
<dbReference type="GeneID" id="67388268"/>
<dbReference type="KEGG" id="tws:TW489"/>
<dbReference type="HOGENOM" id="CLU_1562201_0_0_11"/>
<dbReference type="GO" id="GO:0005737">
    <property type="term" value="C:cytoplasm"/>
    <property type="evidence" value="ECO:0007669"/>
    <property type="project" value="UniProtKB-SubCell"/>
</dbReference>
<dbReference type="GO" id="GO:0004222">
    <property type="term" value="F:metalloendopeptidase activity"/>
    <property type="evidence" value="ECO:0007669"/>
    <property type="project" value="InterPro"/>
</dbReference>
<dbReference type="GO" id="GO:0004521">
    <property type="term" value="F:RNA endonuclease activity"/>
    <property type="evidence" value="ECO:0007669"/>
    <property type="project" value="UniProtKB-UniRule"/>
</dbReference>
<dbReference type="GO" id="GO:0008270">
    <property type="term" value="F:zinc ion binding"/>
    <property type="evidence" value="ECO:0007669"/>
    <property type="project" value="UniProtKB-UniRule"/>
</dbReference>
<dbReference type="GO" id="GO:0006364">
    <property type="term" value="P:rRNA processing"/>
    <property type="evidence" value="ECO:0007669"/>
    <property type="project" value="UniProtKB-UniRule"/>
</dbReference>
<dbReference type="Gene3D" id="3.40.390.30">
    <property type="entry name" value="Metalloproteases ('zincins'), catalytic domain"/>
    <property type="match status" value="1"/>
</dbReference>
<dbReference type="HAMAP" id="MF_00009">
    <property type="entry name" value="Endoribonucl_YbeY"/>
    <property type="match status" value="1"/>
</dbReference>
<dbReference type="InterPro" id="IPR023091">
    <property type="entry name" value="MetalPrtase_cat_dom_sf_prd"/>
</dbReference>
<dbReference type="InterPro" id="IPR002036">
    <property type="entry name" value="YbeY"/>
</dbReference>
<dbReference type="InterPro" id="IPR020549">
    <property type="entry name" value="YbeY_CS"/>
</dbReference>
<dbReference type="NCBIfam" id="TIGR00043">
    <property type="entry name" value="rRNA maturation RNase YbeY"/>
    <property type="match status" value="1"/>
</dbReference>
<dbReference type="PANTHER" id="PTHR46986">
    <property type="entry name" value="ENDORIBONUCLEASE YBEY, CHLOROPLASTIC"/>
    <property type="match status" value="1"/>
</dbReference>
<dbReference type="PANTHER" id="PTHR46986:SF1">
    <property type="entry name" value="ENDORIBONUCLEASE YBEY, CHLOROPLASTIC"/>
    <property type="match status" value="1"/>
</dbReference>
<dbReference type="Pfam" id="PF02130">
    <property type="entry name" value="YbeY"/>
    <property type="match status" value="1"/>
</dbReference>
<dbReference type="SUPFAM" id="SSF55486">
    <property type="entry name" value="Metalloproteases ('zincins'), catalytic domain"/>
    <property type="match status" value="1"/>
</dbReference>
<dbReference type="PROSITE" id="PS01306">
    <property type="entry name" value="UPF0054"/>
    <property type="match status" value="1"/>
</dbReference>
<sequence length="171" mass="19240">MTGLLYLQNSSGYNDCYFKTESLVDFLYRTLFIDKGSYLGVSFITAAEMRDLKIKHFGVNEDSDVLSFPIDEIAPGSENSLVYGVLGDIVVCPETVMRQAVRHPFEHEIYLLVVHGFLHLLGFDHSDAPSKKEMFSLQAKLIEDFFALENLGTPSEEITITPDLRPSLGRI</sequence>
<protein>
    <recommendedName>
        <fullName evidence="1">Endoribonuclease YbeY</fullName>
        <ecNumber evidence="1">3.1.-.-</ecNumber>
    </recommendedName>
</protein>
<keyword id="KW-0963">Cytoplasm</keyword>
<keyword id="KW-0255">Endonuclease</keyword>
<keyword id="KW-0378">Hydrolase</keyword>
<keyword id="KW-0479">Metal-binding</keyword>
<keyword id="KW-0540">Nuclease</keyword>
<keyword id="KW-0690">Ribosome biogenesis</keyword>
<keyword id="KW-0698">rRNA processing</keyword>
<keyword id="KW-0862">Zinc</keyword>
<accession>Q83HN7</accession>
<feature type="chain" id="PRO_0000102559" description="Endoribonuclease YbeY">
    <location>
        <begin position="1"/>
        <end position="171"/>
    </location>
</feature>
<feature type="binding site" evidence="1">
    <location>
        <position position="115"/>
    </location>
    <ligand>
        <name>Zn(2+)</name>
        <dbReference type="ChEBI" id="CHEBI:29105"/>
        <note>catalytic</note>
    </ligand>
</feature>
<feature type="binding site" evidence="1">
    <location>
        <position position="119"/>
    </location>
    <ligand>
        <name>Zn(2+)</name>
        <dbReference type="ChEBI" id="CHEBI:29105"/>
        <note>catalytic</note>
    </ligand>
</feature>
<feature type="binding site" evidence="1">
    <location>
        <position position="125"/>
    </location>
    <ligand>
        <name>Zn(2+)</name>
        <dbReference type="ChEBI" id="CHEBI:29105"/>
        <note>catalytic</note>
    </ligand>
</feature>
<reference key="1">
    <citation type="journal article" date="2003" name="Lancet">
        <title>Sequencing and analysis of the genome of the Whipple's disease bacterium Tropheryma whipplei.</title>
        <authorList>
            <person name="Bentley S.D."/>
            <person name="Maiwald M."/>
            <person name="Murphy L.D."/>
            <person name="Pallen M.J."/>
            <person name="Yeats C.A."/>
            <person name="Dover L.G."/>
            <person name="Norbertczak H.T."/>
            <person name="Besra G.S."/>
            <person name="Quail M.A."/>
            <person name="Harris D.E."/>
            <person name="von Herbay A."/>
            <person name="Goble A."/>
            <person name="Rutter S."/>
            <person name="Squares R."/>
            <person name="Squares S."/>
            <person name="Barrell B.G."/>
            <person name="Parkhill J."/>
            <person name="Relman D.A."/>
        </authorList>
    </citation>
    <scope>NUCLEOTIDE SEQUENCE [LARGE SCALE GENOMIC DNA]</scope>
    <source>
        <strain>TW08/27</strain>
    </source>
</reference>
<name>YBEY_TROW8</name>